<protein>
    <recommendedName>
        <fullName evidence="5">GPI alpha-1,2-mannosyltransferase 3</fullName>
        <ecNumber evidence="1">2.4.1.-</ecNumber>
    </recommendedName>
    <alternativeName>
        <fullName>GPI mannosyltransferase III</fullName>
        <shortName>GPI-MT-III</shortName>
    </alternativeName>
    <alternativeName>
        <fullName evidence="4">Phosphatidylinositol-glycan biosynthesis class B protein</fullName>
        <shortName evidence="4">PIG-B</shortName>
    </alternativeName>
</protein>
<evidence type="ECO:0000250" key="1">
    <source>
        <dbReference type="UniProtKB" id="Q92521"/>
    </source>
</evidence>
<evidence type="ECO:0000255" key="2"/>
<evidence type="ECO:0000256" key="3">
    <source>
        <dbReference type="SAM" id="MobiDB-lite"/>
    </source>
</evidence>
<evidence type="ECO:0000303" key="4">
    <source>
    </source>
</evidence>
<evidence type="ECO:0000305" key="5"/>
<evidence type="ECO:0000312" key="6">
    <source>
        <dbReference type="MGI" id="MGI:1891825"/>
    </source>
</evidence>
<reference key="1">
    <citation type="journal article" date="1996" name="EMBO J.">
        <title>PIG-B, a membrane protein of the endoplasmic reticulum with a large lumenal domain, is involved in transferring the third mannose of the GPI anchor.</title>
        <authorList>
            <person name="Takahashi M."/>
            <person name="Inoue N."/>
            <person name="Ohishi K."/>
            <person name="Maeda Y."/>
            <person name="Nakamura N."/>
            <person name="Endo Y."/>
            <person name="Fujita T."/>
            <person name="Takeda J."/>
            <person name="Kinoshita T."/>
        </authorList>
    </citation>
    <scope>NUCLEOTIDE SEQUENCE [MRNA]</scope>
</reference>
<reference key="2">
    <citation type="journal article" date="2005" name="Science">
        <title>The transcriptional landscape of the mammalian genome.</title>
        <authorList>
            <person name="Carninci P."/>
            <person name="Kasukawa T."/>
            <person name="Katayama S."/>
            <person name="Gough J."/>
            <person name="Frith M.C."/>
            <person name="Maeda N."/>
            <person name="Oyama R."/>
            <person name="Ravasi T."/>
            <person name="Lenhard B."/>
            <person name="Wells C."/>
            <person name="Kodzius R."/>
            <person name="Shimokawa K."/>
            <person name="Bajic V.B."/>
            <person name="Brenner S.E."/>
            <person name="Batalov S."/>
            <person name="Forrest A.R."/>
            <person name="Zavolan M."/>
            <person name="Davis M.J."/>
            <person name="Wilming L.G."/>
            <person name="Aidinis V."/>
            <person name="Allen J.E."/>
            <person name="Ambesi-Impiombato A."/>
            <person name="Apweiler R."/>
            <person name="Aturaliya R.N."/>
            <person name="Bailey T.L."/>
            <person name="Bansal M."/>
            <person name="Baxter L."/>
            <person name="Beisel K.W."/>
            <person name="Bersano T."/>
            <person name="Bono H."/>
            <person name="Chalk A.M."/>
            <person name="Chiu K.P."/>
            <person name="Choudhary V."/>
            <person name="Christoffels A."/>
            <person name="Clutterbuck D.R."/>
            <person name="Crowe M.L."/>
            <person name="Dalla E."/>
            <person name="Dalrymple B.P."/>
            <person name="de Bono B."/>
            <person name="Della Gatta G."/>
            <person name="di Bernardo D."/>
            <person name="Down T."/>
            <person name="Engstrom P."/>
            <person name="Fagiolini M."/>
            <person name="Faulkner G."/>
            <person name="Fletcher C.F."/>
            <person name="Fukushima T."/>
            <person name="Furuno M."/>
            <person name="Futaki S."/>
            <person name="Gariboldi M."/>
            <person name="Georgii-Hemming P."/>
            <person name="Gingeras T.R."/>
            <person name="Gojobori T."/>
            <person name="Green R.E."/>
            <person name="Gustincich S."/>
            <person name="Harbers M."/>
            <person name="Hayashi Y."/>
            <person name="Hensch T.K."/>
            <person name="Hirokawa N."/>
            <person name="Hill D."/>
            <person name="Huminiecki L."/>
            <person name="Iacono M."/>
            <person name="Ikeo K."/>
            <person name="Iwama A."/>
            <person name="Ishikawa T."/>
            <person name="Jakt M."/>
            <person name="Kanapin A."/>
            <person name="Katoh M."/>
            <person name="Kawasawa Y."/>
            <person name="Kelso J."/>
            <person name="Kitamura H."/>
            <person name="Kitano H."/>
            <person name="Kollias G."/>
            <person name="Krishnan S.P."/>
            <person name="Kruger A."/>
            <person name="Kummerfeld S.K."/>
            <person name="Kurochkin I.V."/>
            <person name="Lareau L.F."/>
            <person name="Lazarevic D."/>
            <person name="Lipovich L."/>
            <person name="Liu J."/>
            <person name="Liuni S."/>
            <person name="McWilliam S."/>
            <person name="Madan Babu M."/>
            <person name="Madera M."/>
            <person name="Marchionni L."/>
            <person name="Matsuda H."/>
            <person name="Matsuzawa S."/>
            <person name="Miki H."/>
            <person name="Mignone F."/>
            <person name="Miyake S."/>
            <person name="Morris K."/>
            <person name="Mottagui-Tabar S."/>
            <person name="Mulder N."/>
            <person name="Nakano N."/>
            <person name="Nakauchi H."/>
            <person name="Ng P."/>
            <person name="Nilsson R."/>
            <person name="Nishiguchi S."/>
            <person name="Nishikawa S."/>
            <person name="Nori F."/>
            <person name="Ohara O."/>
            <person name="Okazaki Y."/>
            <person name="Orlando V."/>
            <person name="Pang K.C."/>
            <person name="Pavan W.J."/>
            <person name="Pavesi G."/>
            <person name="Pesole G."/>
            <person name="Petrovsky N."/>
            <person name="Piazza S."/>
            <person name="Reed J."/>
            <person name="Reid J.F."/>
            <person name="Ring B.Z."/>
            <person name="Ringwald M."/>
            <person name="Rost B."/>
            <person name="Ruan Y."/>
            <person name="Salzberg S.L."/>
            <person name="Sandelin A."/>
            <person name="Schneider C."/>
            <person name="Schoenbach C."/>
            <person name="Sekiguchi K."/>
            <person name="Semple C.A."/>
            <person name="Seno S."/>
            <person name="Sessa L."/>
            <person name="Sheng Y."/>
            <person name="Shibata Y."/>
            <person name="Shimada H."/>
            <person name="Shimada K."/>
            <person name="Silva D."/>
            <person name="Sinclair B."/>
            <person name="Sperling S."/>
            <person name="Stupka E."/>
            <person name="Sugiura K."/>
            <person name="Sultana R."/>
            <person name="Takenaka Y."/>
            <person name="Taki K."/>
            <person name="Tammoja K."/>
            <person name="Tan S.L."/>
            <person name="Tang S."/>
            <person name="Taylor M.S."/>
            <person name="Tegner J."/>
            <person name="Teichmann S.A."/>
            <person name="Ueda H.R."/>
            <person name="van Nimwegen E."/>
            <person name="Verardo R."/>
            <person name="Wei C.L."/>
            <person name="Yagi K."/>
            <person name="Yamanishi H."/>
            <person name="Zabarovsky E."/>
            <person name="Zhu S."/>
            <person name="Zimmer A."/>
            <person name="Hide W."/>
            <person name="Bult C."/>
            <person name="Grimmond S.M."/>
            <person name="Teasdale R.D."/>
            <person name="Liu E.T."/>
            <person name="Brusic V."/>
            <person name="Quackenbush J."/>
            <person name="Wahlestedt C."/>
            <person name="Mattick J.S."/>
            <person name="Hume D.A."/>
            <person name="Kai C."/>
            <person name="Sasaki D."/>
            <person name="Tomaru Y."/>
            <person name="Fukuda S."/>
            <person name="Kanamori-Katayama M."/>
            <person name="Suzuki M."/>
            <person name="Aoki J."/>
            <person name="Arakawa T."/>
            <person name="Iida J."/>
            <person name="Imamura K."/>
            <person name="Itoh M."/>
            <person name="Kato T."/>
            <person name="Kawaji H."/>
            <person name="Kawagashira N."/>
            <person name="Kawashima T."/>
            <person name="Kojima M."/>
            <person name="Kondo S."/>
            <person name="Konno H."/>
            <person name="Nakano K."/>
            <person name="Ninomiya N."/>
            <person name="Nishio T."/>
            <person name="Okada M."/>
            <person name="Plessy C."/>
            <person name="Shibata K."/>
            <person name="Shiraki T."/>
            <person name="Suzuki S."/>
            <person name="Tagami M."/>
            <person name="Waki K."/>
            <person name="Watahiki A."/>
            <person name="Okamura-Oho Y."/>
            <person name="Suzuki H."/>
            <person name="Kawai J."/>
            <person name="Hayashizaki Y."/>
        </authorList>
    </citation>
    <scope>NUCLEOTIDE SEQUENCE [LARGE SCALE MRNA]</scope>
    <source>
        <strain>C57BL/6J</strain>
        <tissue>Thymus</tissue>
    </source>
</reference>
<reference key="3">
    <citation type="journal article" date="2004" name="Genome Res.">
        <title>The status, quality, and expansion of the NIH full-length cDNA project: the Mammalian Gene Collection (MGC).</title>
        <authorList>
            <consortium name="The MGC Project Team"/>
        </authorList>
    </citation>
    <scope>NUCLEOTIDE SEQUENCE [LARGE SCALE MRNA]</scope>
    <source>
        <strain>C57BL/6J</strain>
        <tissue>Egg</tissue>
    </source>
</reference>
<feature type="chain" id="PRO_0000246252" description="GPI alpha-1,2-mannosyltransferase 3">
    <location>
        <begin position="1"/>
        <end position="542"/>
    </location>
</feature>
<feature type="transmembrane region" description="Helical" evidence="2">
    <location>
        <begin position="52"/>
        <end position="72"/>
    </location>
</feature>
<feature type="transmembrane region" description="Helical" evidence="2">
    <location>
        <begin position="125"/>
        <end position="145"/>
    </location>
</feature>
<feature type="transmembrane region" description="Helical" evidence="2">
    <location>
        <begin position="213"/>
        <end position="233"/>
    </location>
</feature>
<feature type="transmembrane region" description="Helical" evidence="2">
    <location>
        <begin position="244"/>
        <end position="264"/>
    </location>
</feature>
<feature type="transmembrane region" description="Helical" evidence="2">
    <location>
        <begin position="304"/>
        <end position="324"/>
    </location>
</feature>
<feature type="transmembrane region" description="Helical" evidence="2">
    <location>
        <begin position="327"/>
        <end position="347"/>
    </location>
</feature>
<feature type="transmembrane region" description="Helical" evidence="2">
    <location>
        <begin position="351"/>
        <end position="371"/>
    </location>
</feature>
<feature type="transmembrane region" description="Helical" evidence="2">
    <location>
        <begin position="376"/>
        <end position="396"/>
    </location>
</feature>
<feature type="region of interest" description="Disordered" evidence="3">
    <location>
        <begin position="1"/>
        <end position="36"/>
    </location>
</feature>
<feature type="glycosylation site" description="N-linked (GlcNAc...) asparagine" evidence="2">
    <location>
        <position position="480"/>
    </location>
</feature>
<feature type="sequence conflict" description="In Ref. 1; BAA94827." evidence="5" ref="1">
    <original>V</original>
    <variation>I</variation>
    <location>
        <position position="208"/>
    </location>
</feature>
<feature type="sequence conflict" description="In Ref. 3; AAH52658." evidence="5" ref="3">
    <original>I</original>
    <variation>V</variation>
    <location>
        <position position="407"/>
    </location>
</feature>
<organism>
    <name type="scientific">Mus musculus</name>
    <name type="common">Mouse</name>
    <dbReference type="NCBI Taxonomy" id="10090"/>
    <lineage>
        <taxon>Eukaryota</taxon>
        <taxon>Metazoa</taxon>
        <taxon>Chordata</taxon>
        <taxon>Craniata</taxon>
        <taxon>Vertebrata</taxon>
        <taxon>Euteleostomi</taxon>
        <taxon>Mammalia</taxon>
        <taxon>Eutheria</taxon>
        <taxon>Euarchontoglires</taxon>
        <taxon>Glires</taxon>
        <taxon>Rodentia</taxon>
        <taxon>Myomorpha</taxon>
        <taxon>Muroidea</taxon>
        <taxon>Muridae</taxon>
        <taxon>Murinae</taxon>
        <taxon>Mus</taxon>
        <taxon>Mus</taxon>
    </lineage>
</organism>
<sequence length="542" mass="63120">MESQAADYNPASRNLHGSSGEMKLRRRKSRQYVSAQEKRSPRRGLLGENTYLVLFTIALRILNCFLVQTSFVPDEYWQSLEVAHRMVFSYGYLTWEWTERLRGYTYPLIFASIYKVLHLLGKDSVQFLIWIPRLGQALLSAVADIRLYSLLKQLENQEVAQWVFLCQLCSWFTWYCCTRTLTNTMETSLTALALFYYPLEGSRSVNSVKYSLLVALACVVRPTALIPWVPLLFRHFYQEQRKLHLTLHHFLPVGFITFSLSLIIDRIFFGQWTLVQLNFLKFNVLQNLGTFYGSHPWHWYLSQGFPVVLGTHLPFFIHGCFLAPRRLHILLLTVLWTLLVYSMLGHKEFRFIYPVLPFCMVFCGYSLAHLKTWRKAALSFLLLSNVPLAFYTGLVHQRGTLDVMNHIQKVCPRGPDPASASVFIMMPCHSTPYYSHVHCPLSMRFLQCPPDLTGKTQYLDEADMFYLNPLRWLQQEFHSNASLPTHLVTFNVLEKEINTFLTSGNYERAATFFHTHWPERRTGSHIHVYERRLPGRVNTGGN</sequence>
<gene>
    <name evidence="6" type="primary">Pigb</name>
</gene>
<keyword id="KW-0256">Endoplasmic reticulum</keyword>
<keyword id="KW-0325">Glycoprotein</keyword>
<keyword id="KW-0328">Glycosyltransferase</keyword>
<keyword id="KW-0337">GPI-anchor biosynthesis</keyword>
<keyword id="KW-0472">Membrane</keyword>
<keyword id="KW-1185">Reference proteome</keyword>
<keyword id="KW-0808">Transferase</keyword>
<keyword id="KW-0812">Transmembrane</keyword>
<keyword id="KW-1133">Transmembrane helix</keyword>
<proteinExistence type="evidence at transcript level"/>
<name>PIGB_MOUSE</name>
<dbReference type="EC" id="2.4.1.-" evidence="1"/>
<dbReference type="EMBL" id="D84436">
    <property type="protein sequence ID" value="BAA94827.1"/>
    <property type="molecule type" value="mRNA"/>
</dbReference>
<dbReference type="EMBL" id="AK153819">
    <property type="protein sequence ID" value="BAE32195.1"/>
    <property type="molecule type" value="mRNA"/>
</dbReference>
<dbReference type="EMBL" id="BC052658">
    <property type="protein sequence ID" value="AAH52658.1"/>
    <property type="molecule type" value="mRNA"/>
</dbReference>
<dbReference type="CCDS" id="CCDS40687.1"/>
<dbReference type="RefSeq" id="NP_001397577.1">
    <property type="nucleotide sequence ID" value="NM_001410648.1"/>
</dbReference>
<dbReference type="RefSeq" id="NP_061377.2">
    <property type="nucleotide sequence ID" value="NM_018889.4"/>
</dbReference>
<dbReference type="BioGRID" id="207753">
    <property type="interactions" value="1"/>
</dbReference>
<dbReference type="FunCoup" id="Q9JJQ0">
    <property type="interactions" value="2331"/>
</dbReference>
<dbReference type="STRING" id="10090.ENSMUSP00000139269"/>
<dbReference type="CAZy" id="GT22">
    <property type="family name" value="Glycosyltransferase Family 22"/>
</dbReference>
<dbReference type="GlyCosmos" id="Q9JJQ0">
    <property type="glycosylation" value="1 site, No reported glycans"/>
</dbReference>
<dbReference type="GlyGen" id="Q9JJQ0">
    <property type="glycosylation" value="1 site, 1 N-linked glycan (1 site)"/>
</dbReference>
<dbReference type="iPTMnet" id="Q9JJQ0"/>
<dbReference type="PhosphoSitePlus" id="Q9JJQ0"/>
<dbReference type="jPOST" id="Q9JJQ0"/>
<dbReference type="PaxDb" id="10090-ENSMUSP00000139269"/>
<dbReference type="PeptideAtlas" id="Q9JJQ0"/>
<dbReference type="ProteomicsDB" id="289574"/>
<dbReference type="Pumba" id="Q9JJQ0"/>
<dbReference type="Antibodypedia" id="25067">
    <property type="antibodies" value="94 antibodies from 19 providers"/>
</dbReference>
<dbReference type="DNASU" id="55981"/>
<dbReference type="Ensembl" id="ENSMUST00000183746.8">
    <property type="protein sequence ID" value="ENSMUSP00000138885.2"/>
    <property type="gene ID" value="ENSMUSG00000079469.12"/>
</dbReference>
<dbReference type="Ensembl" id="ENSMUST00000184035.8">
    <property type="protein sequence ID" value="ENSMUSP00000139269.2"/>
    <property type="gene ID" value="ENSMUSG00000079469.12"/>
</dbReference>
<dbReference type="Ensembl" id="ENSMUST00000184389.8">
    <property type="protein sequence ID" value="ENSMUSP00000139076.2"/>
    <property type="gene ID" value="ENSMUSG00000079469.12"/>
</dbReference>
<dbReference type="GeneID" id="55981"/>
<dbReference type="KEGG" id="mmu:55981"/>
<dbReference type="UCSC" id="uc009qqs.1">
    <property type="organism name" value="mouse"/>
</dbReference>
<dbReference type="AGR" id="MGI:1891825"/>
<dbReference type="CTD" id="9488"/>
<dbReference type="MGI" id="MGI:1891825">
    <property type="gene designation" value="Pigb"/>
</dbReference>
<dbReference type="VEuPathDB" id="HostDB:ENSMUSG00000079469"/>
<dbReference type="eggNOG" id="KOG1771">
    <property type="taxonomic scope" value="Eukaryota"/>
</dbReference>
<dbReference type="GeneTree" id="ENSGT00950000183090"/>
<dbReference type="HOGENOM" id="CLU_012353_2_0_1"/>
<dbReference type="InParanoid" id="Q9JJQ0"/>
<dbReference type="OMA" id="HHMVFNN"/>
<dbReference type="OrthoDB" id="416834at2759"/>
<dbReference type="PhylomeDB" id="Q9JJQ0"/>
<dbReference type="TreeFam" id="TF313518"/>
<dbReference type="Reactome" id="R-MMU-162710">
    <property type="pathway name" value="Synthesis of glycosylphosphatidylinositol (GPI)"/>
</dbReference>
<dbReference type="UniPathway" id="UPA00196"/>
<dbReference type="BioGRID-ORCS" id="55981">
    <property type="hits" value="11 hits in 80 CRISPR screens"/>
</dbReference>
<dbReference type="ChiTaRS" id="Pigb">
    <property type="organism name" value="mouse"/>
</dbReference>
<dbReference type="PRO" id="PR:Q9JJQ0"/>
<dbReference type="Proteomes" id="UP000000589">
    <property type="component" value="Chromosome 9"/>
</dbReference>
<dbReference type="RNAct" id="Q9JJQ0">
    <property type="molecule type" value="protein"/>
</dbReference>
<dbReference type="Bgee" id="ENSMUSG00000079469">
    <property type="expression patterns" value="Expressed in ascending aorta and 173 other cell types or tissues"/>
</dbReference>
<dbReference type="ExpressionAtlas" id="Q9JJQ0">
    <property type="expression patterns" value="baseline and differential"/>
</dbReference>
<dbReference type="GO" id="GO:0005789">
    <property type="term" value="C:endoplasmic reticulum membrane"/>
    <property type="evidence" value="ECO:0000314"/>
    <property type="project" value="MGI"/>
</dbReference>
<dbReference type="GO" id="GO:0000026">
    <property type="term" value="F:alpha-1,2-mannosyltransferase activity"/>
    <property type="evidence" value="ECO:0007669"/>
    <property type="project" value="Ensembl"/>
</dbReference>
<dbReference type="GO" id="GO:0006506">
    <property type="term" value="P:GPI anchor biosynthetic process"/>
    <property type="evidence" value="ECO:0007669"/>
    <property type="project" value="UniProtKB-UniPathway"/>
</dbReference>
<dbReference type="GO" id="GO:0006505">
    <property type="term" value="P:GPI anchor metabolic process"/>
    <property type="evidence" value="ECO:0000250"/>
    <property type="project" value="MGI"/>
</dbReference>
<dbReference type="InterPro" id="IPR005599">
    <property type="entry name" value="GPI_mannosylTrfase"/>
</dbReference>
<dbReference type="PANTHER" id="PTHR22760">
    <property type="entry name" value="GLYCOSYLTRANSFERASE"/>
    <property type="match status" value="1"/>
</dbReference>
<dbReference type="PANTHER" id="PTHR22760:SF4">
    <property type="entry name" value="GPI MANNOSYLTRANSFERASE 3"/>
    <property type="match status" value="1"/>
</dbReference>
<dbReference type="Pfam" id="PF03901">
    <property type="entry name" value="Glyco_transf_22"/>
    <property type="match status" value="1"/>
</dbReference>
<accession>Q9JJQ0</accession>
<accession>Q3U585</accession>
<accession>Q7TQ01</accession>
<comment type="function">
    <text evidence="1">Alpha-1,2-mannosyltransferase that catalyzes the transfer of the third mannose, via an alpha-1,2 bond, from a dolichol-phosphate-mannose (Dol-P-Man) to an alpha-D-Man-(1-&gt;6)-2-PEtn-alpha-D-Man-(1-&gt;4)-alpha-D-GlcN-(1-&gt;6)-(1-radyl,2-acyl-sn-glycero-3-phospho)-2-acyl-inositol intermediate to generate an alpha-D-Man-(1-&gt;2)-alpha-D-Man-(1-&gt;6)-2-PEtn-alpha-D-Man-(1-&gt;4)-alpha-D-GlcN-(1-&gt;6)-(1-radyl,2-acyl-sn-glycero-3-phospho)-2-acyl-inositol (also termed H6) and participates in the nineth step of the glycosylphosphatidylinositol-anchor biosynthesis (By similarity). May also add the third mannose to an alpha-D-Man-(1-&gt;6)-alpha-D-Man-(1-&gt;4)-alpha-D-GlcN-(1-&gt;6)-(1-radyl,2-acyl-sn-glycero-3-phospho)-2-acyl-inositol (also termed H3) intermediate generating an alpha-D-Man-(1-&gt;2)-alpha-D-Man-(1-&gt;6)-alpha-D-Man-(1-&gt;4)-alpha-D-GlcN-(1-&gt;6)-(1-radyl,2-acyl-sn-glycero-3-phospho)-2-acyl-inositol (also termed H4) (By similarity).</text>
</comment>
<comment type="pathway">
    <text evidence="1">Glycolipid biosynthesis; glycosylphosphatidylinositol-anchor biosynthesis.</text>
</comment>
<comment type="subcellular location">
    <subcellularLocation>
        <location evidence="1">Endoplasmic reticulum membrane</location>
        <topology evidence="2">Multi-pass membrane protein</topology>
    </subcellularLocation>
</comment>
<comment type="similarity">
    <text evidence="5">Belongs to the glycosyltransferase 22 family. PIGB subfamily.</text>
</comment>